<comment type="subcellular location">
    <subcellularLocation>
        <location>Plastid</location>
        <location>Chloroplast</location>
    </subcellularLocation>
</comment>
<comment type="similarity">
    <text evidence="1">Belongs to the bacterial ribosomal protein bL36 family.</text>
</comment>
<geneLocation type="chloroplast"/>
<feature type="chain" id="PRO_0000276831" description="Large ribosomal subunit protein bL36c">
    <location>
        <begin position="1"/>
        <end position="37"/>
    </location>
</feature>
<protein>
    <recommendedName>
        <fullName evidence="1">Large ribosomal subunit protein bL36c</fullName>
    </recommendedName>
    <alternativeName>
        <fullName evidence="2">50S ribosomal protein L36, chloroplastic</fullName>
    </alternativeName>
</protein>
<evidence type="ECO:0000255" key="1">
    <source>
        <dbReference type="HAMAP-Rule" id="MF_00251"/>
    </source>
</evidence>
<evidence type="ECO:0000305" key="2"/>
<organism>
    <name type="scientific">Populus alba</name>
    <name type="common">White poplar</name>
    <dbReference type="NCBI Taxonomy" id="43335"/>
    <lineage>
        <taxon>Eukaryota</taxon>
        <taxon>Viridiplantae</taxon>
        <taxon>Streptophyta</taxon>
        <taxon>Embryophyta</taxon>
        <taxon>Tracheophyta</taxon>
        <taxon>Spermatophyta</taxon>
        <taxon>Magnoliopsida</taxon>
        <taxon>eudicotyledons</taxon>
        <taxon>Gunneridae</taxon>
        <taxon>Pentapetalae</taxon>
        <taxon>rosids</taxon>
        <taxon>fabids</taxon>
        <taxon>Malpighiales</taxon>
        <taxon>Salicaceae</taxon>
        <taxon>Saliceae</taxon>
        <taxon>Populus</taxon>
    </lineage>
</organism>
<gene>
    <name evidence="1" type="primary">rpl36</name>
</gene>
<name>RK36_POPAL</name>
<dbReference type="EMBL" id="AP008956">
    <property type="protein sequence ID" value="BAE97239.1"/>
    <property type="molecule type" value="Genomic_DNA"/>
</dbReference>
<dbReference type="RefSeq" id="YP_665592.1">
    <property type="nucleotide sequence ID" value="NC_008235.1"/>
</dbReference>
<dbReference type="SMR" id="Q14FC3"/>
<dbReference type="GeneID" id="4178252"/>
<dbReference type="KEGG" id="palz:4178252"/>
<dbReference type="GO" id="GO:0009507">
    <property type="term" value="C:chloroplast"/>
    <property type="evidence" value="ECO:0007669"/>
    <property type="project" value="UniProtKB-SubCell"/>
</dbReference>
<dbReference type="GO" id="GO:1990904">
    <property type="term" value="C:ribonucleoprotein complex"/>
    <property type="evidence" value="ECO:0007669"/>
    <property type="project" value="UniProtKB-KW"/>
</dbReference>
<dbReference type="GO" id="GO:0005840">
    <property type="term" value="C:ribosome"/>
    <property type="evidence" value="ECO:0007669"/>
    <property type="project" value="UniProtKB-KW"/>
</dbReference>
<dbReference type="GO" id="GO:0003735">
    <property type="term" value="F:structural constituent of ribosome"/>
    <property type="evidence" value="ECO:0007669"/>
    <property type="project" value="InterPro"/>
</dbReference>
<dbReference type="GO" id="GO:0006412">
    <property type="term" value="P:translation"/>
    <property type="evidence" value="ECO:0007669"/>
    <property type="project" value="UniProtKB-UniRule"/>
</dbReference>
<dbReference type="HAMAP" id="MF_00251">
    <property type="entry name" value="Ribosomal_bL36"/>
    <property type="match status" value="1"/>
</dbReference>
<dbReference type="InterPro" id="IPR000473">
    <property type="entry name" value="Ribosomal_bL36"/>
</dbReference>
<dbReference type="InterPro" id="IPR035977">
    <property type="entry name" value="Ribosomal_bL36_sp"/>
</dbReference>
<dbReference type="NCBIfam" id="TIGR01022">
    <property type="entry name" value="rpmJ_bact"/>
    <property type="match status" value="1"/>
</dbReference>
<dbReference type="PANTHER" id="PTHR42888">
    <property type="entry name" value="50S RIBOSOMAL PROTEIN L36, CHLOROPLASTIC"/>
    <property type="match status" value="1"/>
</dbReference>
<dbReference type="PANTHER" id="PTHR42888:SF1">
    <property type="entry name" value="LARGE RIBOSOMAL SUBUNIT PROTEIN BL36C"/>
    <property type="match status" value="1"/>
</dbReference>
<dbReference type="Pfam" id="PF00444">
    <property type="entry name" value="Ribosomal_L36"/>
    <property type="match status" value="1"/>
</dbReference>
<dbReference type="SUPFAM" id="SSF57840">
    <property type="entry name" value="Ribosomal protein L36"/>
    <property type="match status" value="1"/>
</dbReference>
<dbReference type="PROSITE" id="PS00828">
    <property type="entry name" value="RIBOSOMAL_L36"/>
    <property type="match status" value="1"/>
</dbReference>
<proteinExistence type="inferred from homology"/>
<keyword id="KW-0150">Chloroplast</keyword>
<keyword id="KW-0934">Plastid</keyword>
<keyword id="KW-0687">Ribonucleoprotein</keyword>
<keyword id="KW-0689">Ribosomal protein</keyword>
<reference key="1">
    <citation type="submission" date="2005-03" db="EMBL/GenBank/DDBJ databases">
        <title>Complete structure of the chloroplast genome of Populus alba.</title>
        <authorList>
            <person name="Okumura S."/>
            <person name="Yamashita A."/>
            <person name="Kanamoto H."/>
            <person name="Hattori M."/>
            <person name="Takase H."/>
            <person name="Tomizawa K."/>
        </authorList>
    </citation>
    <scope>NUCLEOTIDE SEQUENCE [LARGE SCALE GENOMIC DNA]</scope>
</reference>
<accession>Q14FC3</accession>
<sequence length="37" mass="4446">MKIRASARKICEKCRLIRRRGRILIICSNPRHKQRQG</sequence>